<keyword id="KW-0067">ATP-binding</keyword>
<keyword id="KW-0963">Cytoplasm</keyword>
<keyword id="KW-0436">Ligase</keyword>
<keyword id="KW-0547">Nucleotide-binding</keyword>
<keyword id="KW-1185">Reference proteome</keyword>
<keyword id="KW-0819">tRNA processing</keyword>
<organism>
    <name type="scientific">Methylobacterium nodulans (strain LMG 21967 / CNCM I-2342 / ORS 2060)</name>
    <dbReference type="NCBI Taxonomy" id="460265"/>
    <lineage>
        <taxon>Bacteria</taxon>
        <taxon>Pseudomonadati</taxon>
        <taxon>Pseudomonadota</taxon>
        <taxon>Alphaproteobacteria</taxon>
        <taxon>Hyphomicrobiales</taxon>
        <taxon>Methylobacteriaceae</taxon>
        <taxon>Methylobacterium</taxon>
    </lineage>
</organism>
<feature type="chain" id="PRO_1000164320" description="tRNA(Ile)-lysidine synthase">
    <location>
        <begin position="1"/>
        <end position="339"/>
    </location>
</feature>
<feature type="binding site" evidence="1">
    <location>
        <begin position="34"/>
        <end position="39"/>
    </location>
    <ligand>
        <name>ATP</name>
        <dbReference type="ChEBI" id="CHEBI:30616"/>
    </ligand>
</feature>
<dbReference type="EC" id="6.3.4.19" evidence="1"/>
<dbReference type="EMBL" id="CP001349">
    <property type="protein sequence ID" value="ACL60334.1"/>
    <property type="molecule type" value="Genomic_DNA"/>
</dbReference>
<dbReference type="RefSeq" id="WP_015931941.1">
    <property type="nucleotide sequence ID" value="NC_011894.1"/>
</dbReference>
<dbReference type="SMR" id="B8IP16"/>
<dbReference type="STRING" id="460265.Mnod_5490"/>
<dbReference type="KEGG" id="mno:Mnod_5490"/>
<dbReference type="eggNOG" id="COG0037">
    <property type="taxonomic scope" value="Bacteria"/>
</dbReference>
<dbReference type="HOGENOM" id="CLU_018869_3_2_5"/>
<dbReference type="OrthoDB" id="9807403at2"/>
<dbReference type="Proteomes" id="UP000008207">
    <property type="component" value="Chromosome"/>
</dbReference>
<dbReference type="GO" id="GO:0005737">
    <property type="term" value="C:cytoplasm"/>
    <property type="evidence" value="ECO:0007669"/>
    <property type="project" value="UniProtKB-SubCell"/>
</dbReference>
<dbReference type="GO" id="GO:0005524">
    <property type="term" value="F:ATP binding"/>
    <property type="evidence" value="ECO:0007669"/>
    <property type="project" value="UniProtKB-UniRule"/>
</dbReference>
<dbReference type="GO" id="GO:0032267">
    <property type="term" value="F:tRNA(Ile)-lysidine synthase activity"/>
    <property type="evidence" value="ECO:0007669"/>
    <property type="project" value="UniProtKB-EC"/>
</dbReference>
<dbReference type="GO" id="GO:0006400">
    <property type="term" value="P:tRNA modification"/>
    <property type="evidence" value="ECO:0007669"/>
    <property type="project" value="UniProtKB-UniRule"/>
</dbReference>
<dbReference type="CDD" id="cd01992">
    <property type="entry name" value="TilS_N"/>
    <property type="match status" value="1"/>
</dbReference>
<dbReference type="Gene3D" id="3.40.50.620">
    <property type="entry name" value="HUPs"/>
    <property type="match status" value="1"/>
</dbReference>
<dbReference type="HAMAP" id="MF_01161">
    <property type="entry name" value="tRNA_Ile_lys_synt"/>
    <property type="match status" value="1"/>
</dbReference>
<dbReference type="InterPro" id="IPR014729">
    <property type="entry name" value="Rossmann-like_a/b/a_fold"/>
</dbReference>
<dbReference type="InterPro" id="IPR011063">
    <property type="entry name" value="TilS/TtcA_N"/>
</dbReference>
<dbReference type="InterPro" id="IPR012094">
    <property type="entry name" value="tRNA_Ile_lys_synt"/>
</dbReference>
<dbReference type="InterPro" id="IPR012795">
    <property type="entry name" value="tRNA_Ile_lys_synt_N"/>
</dbReference>
<dbReference type="NCBIfam" id="TIGR02432">
    <property type="entry name" value="lysidine_TilS_N"/>
    <property type="match status" value="1"/>
</dbReference>
<dbReference type="PANTHER" id="PTHR43033">
    <property type="entry name" value="TRNA(ILE)-LYSIDINE SYNTHASE-RELATED"/>
    <property type="match status" value="1"/>
</dbReference>
<dbReference type="PANTHER" id="PTHR43033:SF1">
    <property type="entry name" value="TRNA(ILE)-LYSIDINE SYNTHASE-RELATED"/>
    <property type="match status" value="1"/>
</dbReference>
<dbReference type="Pfam" id="PF01171">
    <property type="entry name" value="ATP_bind_3"/>
    <property type="match status" value="1"/>
</dbReference>
<dbReference type="SUPFAM" id="SSF52402">
    <property type="entry name" value="Adenine nucleotide alpha hydrolases-like"/>
    <property type="match status" value="1"/>
</dbReference>
<dbReference type="SUPFAM" id="SSF82829">
    <property type="entry name" value="MesJ substrate recognition domain-like"/>
    <property type="match status" value="1"/>
</dbReference>
<proteinExistence type="inferred from homology"/>
<accession>B8IP16</accession>
<comment type="function">
    <text evidence="1">Ligates lysine onto the cytidine present at position 34 of the AUA codon-specific tRNA(Ile) that contains the anticodon CAU, in an ATP-dependent manner. Cytidine is converted to lysidine, thus changing the amino acid specificity of the tRNA from methionine to isoleucine.</text>
</comment>
<comment type="catalytic activity">
    <reaction evidence="1">
        <text>cytidine(34) in tRNA(Ile2) + L-lysine + ATP = lysidine(34) in tRNA(Ile2) + AMP + diphosphate + H(+)</text>
        <dbReference type="Rhea" id="RHEA:43744"/>
        <dbReference type="Rhea" id="RHEA-COMP:10625"/>
        <dbReference type="Rhea" id="RHEA-COMP:10670"/>
        <dbReference type="ChEBI" id="CHEBI:15378"/>
        <dbReference type="ChEBI" id="CHEBI:30616"/>
        <dbReference type="ChEBI" id="CHEBI:32551"/>
        <dbReference type="ChEBI" id="CHEBI:33019"/>
        <dbReference type="ChEBI" id="CHEBI:82748"/>
        <dbReference type="ChEBI" id="CHEBI:83665"/>
        <dbReference type="ChEBI" id="CHEBI:456215"/>
        <dbReference type="EC" id="6.3.4.19"/>
    </reaction>
</comment>
<comment type="subcellular location">
    <subcellularLocation>
        <location evidence="1">Cytoplasm</location>
    </subcellularLocation>
</comment>
<comment type="domain">
    <text>The N-terminal region contains the highly conserved SGGXDS motif, predicted to be a P-loop motif involved in ATP binding.</text>
</comment>
<comment type="similarity">
    <text evidence="1">Belongs to the tRNA(Ile)-lysidine synthase family.</text>
</comment>
<sequence length="339" mass="35242">MTEAARPLDREEFARRLDRWLGPGAAGGVVLAVSGGPDSTALMGGAARLPPLVPVMVATVDHGLRPEAAAEAEAVARLAGRLGLPHRILAWTGPKPRTRLQEAARAARYRLLLDLAREQGAAALLTAHTLDDQAETVLMRLCAGSGPAGLGGIEPVRHLGGLALVRPFLDLPKARLVATCAAEGWPFVVDPGNADARFARGRLRRVMPHLAAEGLTAARLARLAERLRRNEAALAAAADAALDALARPGARPGGMMLDARGLAVLPEAVALRVLARAIATVVGGNARPARLERLEDVLFGRLLPAIAAGGRLRCTLGGALLHLSGGSLSLSPEPPRRAG</sequence>
<protein>
    <recommendedName>
        <fullName evidence="1">tRNA(Ile)-lysidine synthase</fullName>
        <ecNumber evidence="1">6.3.4.19</ecNumber>
    </recommendedName>
    <alternativeName>
        <fullName evidence="1">tRNA(Ile)-2-lysyl-cytidine synthase</fullName>
    </alternativeName>
    <alternativeName>
        <fullName evidence="1">tRNA(Ile)-lysidine synthetase</fullName>
    </alternativeName>
</protein>
<evidence type="ECO:0000255" key="1">
    <source>
        <dbReference type="HAMAP-Rule" id="MF_01161"/>
    </source>
</evidence>
<gene>
    <name evidence="1" type="primary">tilS</name>
    <name type="ordered locus">Mnod_5490</name>
</gene>
<reference key="1">
    <citation type="submission" date="2009-01" db="EMBL/GenBank/DDBJ databases">
        <title>Complete sequence of chromosome of Methylobacterium nodulans ORS 2060.</title>
        <authorList>
            <consortium name="US DOE Joint Genome Institute"/>
            <person name="Lucas S."/>
            <person name="Copeland A."/>
            <person name="Lapidus A."/>
            <person name="Glavina del Rio T."/>
            <person name="Dalin E."/>
            <person name="Tice H."/>
            <person name="Bruce D."/>
            <person name="Goodwin L."/>
            <person name="Pitluck S."/>
            <person name="Sims D."/>
            <person name="Brettin T."/>
            <person name="Detter J.C."/>
            <person name="Han C."/>
            <person name="Larimer F."/>
            <person name="Land M."/>
            <person name="Hauser L."/>
            <person name="Kyrpides N."/>
            <person name="Ivanova N."/>
            <person name="Marx C.J."/>
            <person name="Richardson P."/>
        </authorList>
    </citation>
    <scope>NUCLEOTIDE SEQUENCE [LARGE SCALE GENOMIC DNA]</scope>
    <source>
        <strain>LMG 21967 / CNCM I-2342 / ORS 2060</strain>
    </source>
</reference>
<name>TILS_METNO</name>